<proteinExistence type="evidence at transcript level"/>
<feature type="signal peptide" evidence="2">
    <location>
        <begin position="1"/>
        <end position="19"/>
    </location>
</feature>
<feature type="propeptide" id="PRO_0000227896" evidence="2">
    <location>
        <begin position="20"/>
        <end position="263"/>
    </location>
</feature>
<feature type="chain" id="PRO_0000227897" description="Bone morphogenetic protein 8A">
    <location>
        <begin position="264"/>
        <end position="402"/>
    </location>
</feature>
<feature type="glycosylation site" description="N-linked (GlcNAc...) asparagine" evidence="2">
    <location>
        <position position="158"/>
    </location>
</feature>
<feature type="glycosylation site" description="N-linked (GlcNAc...) asparagine" evidence="2">
    <location>
        <position position="343"/>
    </location>
</feature>
<feature type="disulfide bond" evidence="1">
    <location>
        <begin position="301"/>
        <end position="367"/>
    </location>
</feature>
<feature type="disulfide bond" evidence="1">
    <location>
        <begin position="330"/>
        <end position="399"/>
    </location>
</feature>
<feature type="disulfide bond" evidence="1">
    <location>
        <begin position="334"/>
        <end position="401"/>
    </location>
</feature>
<feature type="disulfide bond" description="Interchain" evidence="1">
    <location>
        <position position="366"/>
    </location>
</feature>
<feature type="sequence variant" id="VAR_059859" description="In dbSNP:rs4660269.">
    <original>M</original>
    <variation>V</variation>
    <location>
        <position position="84"/>
    </location>
</feature>
<feature type="sequence variant" id="VAR_052571" description="In dbSNP:rs6525." evidence="5">
    <original>R</original>
    <variation>H</variation>
    <location>
        <position position="293"/>
    </location>
</feature>
<evidence type="ECO:0000250" key="1"/>
<evidence type="ECO:0000255" key="2"/>
<evidence type="ECO:0000269" key="3">
    <source>
    </source>
</evidence>
<evidence type="ECO:0000269" key="4">
    <source>
    </source>
</evidence>
<evidence type="ECO:0000269" key="5">
    <source ref="1"/>
</evidence>
<evidence type="ECO:0000305" key="6"/>
<evidence type="ECO:0000305" key="7">
    <source>
    </source>
</evidence>
<gene>
    <name type="primary">BMP8A</name>
</gene>
<keyword id="KW-0891">Chondrogenesis</keyword>
<keyword id="KW-0202">Cytokine</keyword>
<keyword id="KW-0217">Developmental protein</keyword>
<keyword id="KW-0221">Differentiation</keyword>
<keyword id="KW-1015">Disulfide bond</keyword>
<keyword id="KW-0325">Glycoprotein</keyword>
<keyword id="KW-0339">Growth factor</keyword>
<keyword id="KW-0892">Osteogenesis</keyword>
<keyword id="KW-1185">Reference proteome</keyword>
<keyword id="KW-0964">Secreted</keyword>
<keyword id="KW-0732">Signal</keyword>
<protein>
    <recommendedName>
        <fullName>Bone morphogenetic protein 8A</fullName>
        <shortName>BMP-8A</shortName>
    </recommendedName>
</protein>
<comment type="function">
    <text evidence="1 3">Induces cartilage and bone formation. May be the osteoinductive factor responsible for the phenomenon of epithelial osteogenesis. Plays a role in calcium regulation and bone homeostasis (By similarity). Signaling protein involved in regulation of thermogenesis and energy balance. Proposed to increase the peripheral response of brown adipose tissue (BAT) to adrenergic stimulation while acting centrally in the hypothalamus to increase sympathetic output to BAT.</text>
</comment>
<comment type="function">
    <text evidence="3 4">Growth factor of the TGF-beta superfamily that plays important role in various biological processes, including spermatogenesis, osteogenesis, steroidogenesis as well as regulation of energy balance (PubMed:22579288, PubMed:31940275). Initiates the canonical BMP signaling cascade by associating with type I receptor BMPR1A and type II receptor BMPR2 (PubMed:31940275). Once all three components are bound together in a complex at the cell surface, BMPR2 phosphorylates and activates BMPR1A. In turn, BMPR1A propagates signal by phosphorylating SMAD1/5/8 that travel to the nucleus and act as activators and repressors of transcription of target genes. In addition, activates the SMAD2/3 pathway (PubMed:31940275).</text>
</comment>
<comment type="subunit">
    <text evidence="1">Homodimer; disulfide-linked.</text>
</comment>
<comment type="subcellular location">
    <subcellularLocation>
        <location evidence="6">Secreted</location>
    </subcellularLocation>
</comment>
<comment type="similarity">
    <text evidence="6">Belongs to the TGF-beta family.</text>
</comment>
<comment type="caution">
    <text evidence="7">Experiments with human recombinant protein (in mouse system by intracerebroventricular treatment) are reported for BMP8B but the protein is corresponding to BMP8A according sequence data provided by the supplier; related experiments with Bmp8b-/- mice show similar results.</text>
</comment>
<comment type="online information" name="Wikipedia">
    <link uri="https://en.wikipedia.org/wiki/Bone_morphogenetic_protein_8A"/>
    <text>Bone morphogenetic protein 8A entry</text>
</comment>
<sequence length="402" mass="44798">MAARPGPLWLLGLTLCALGGGGPGLRPPPGCPQRRLGARERRDVQREILAVLGLPGRPRPRAPPAASRLPASAPLFMLDLYHAMAGDDDEDGAPAEQRLGRADLVMSFVNMVERDRALGHQEPHWKEFRFDLTQIPAGEAVTAAEFRIYKVPSIHLLNRTLHVSMFQVVQEQSNRESDLFFLDLQTLRAGDEGWLVLDVTAASDCWLLKRHKDLGLRLYVETEDGHSVDPGLAGLLGQRAPRSQQPFVVTFFRASPSPIRTPRAVRPLRRRQPKKSNELPQANRLPGIFDDVRGSHGRQVCRRHELYVSFQDLGWLDWVIAPQGYSAYYCEGECSFPLDSCMNATNHAILQSLVHLMKPNAVPKACCAPTKLSATSVLYYDSSNNVILRKHRNMVVKACGCH</sequence>
<reference key="1">
    <citation type="submission" date="2003-06" db="EMBL/GenBank/DDBJ databases">
        <title>Evolution of testis specific Scot-t genes encoding succinyl-CoA:3-oxoacid CoA-transferase, functional retroposons generated from somatic tissue-type paralog.</title>
        <authorList>
            <person name="Onishi M."/>
            <person name="Yasunaga T."/>
            <person name="Tanaka H."/>
            <person name="Nishimune Y."/>
            <person name="Nozaki M."/>
        </authorList>
    </citation>
    <scope>NUCLEOTIDE SEQUENCE [MRNA]</scope>
    <scope>VARIANT HIS-293</scope>
</reference>
<reference key="2">
    <citation type="journal article" date="2006" name="Nature">
        <title>The DNA sequence and biological annotation of human chromosome 1.</title>
        <authorList>
            <person name="Gregory S.G."/>
            <person name="Barlow K.F."/>
            <person name="McLay K.E."/>
            <person name="Kaul R."/>
            <person name="Swarbreck D."/>
            <person name="Dunham A."/>
            <person name="Scott C.E."/>
            <person name="Howe K.L."/>
            <person name="Woodfine K."/>
            <person name="Spencer C.C.A."/>
            <person name="Jones M.C."/>
            <person name="Gillson C."/>
            <person name="Searle S."/>
            <person name="Zhou Y."/>
            <person name="Kokocinski F."/>
            <person name="McDonald L."/>
            <person name="Evans R."/>
            <person name="Phillips K."/>
            <person name="Atkinson A."/>
            <person name="Cooper R."/>
            <person name="Jones C."/>
            <person name="Hall R.E."/>
            <person name="Andrews T.D."/>
            <person name="Lloyd C."/>
            <person name="Ainscough R."/>
            <person name="Almeida J.P."/>
            <person name="Ambrose K.D."/>
            <person name="Anderson F."/>
            <person name="Andrew R.W."/>
            <person name="Ashwell R.I.S."/>
            <person name="Aubin K."/>
            <person name="Babbage A.K."/>
            <person name="Bagguley C.L."/>
            <person name="Bailey J."/>
            <person name="Beasley H."/>
            <person name="Bethel G."/>
            <person name="Bird C.P."/>
            <person name="Bray-Allen S."/>
            <person name="Brown J.Y."/>
            <person name="Brown A.J."/>
            <person name="Buckley D."/>
            <person name="Burton J."/>
            <person name="Bye J."/>
            <person name="Carder C."/>
            <person name="Chapman J.C."/>
            <person name="Clark S.Y."/>
            <person name="Clarke G."/>
            <person name="Clee C."/>
            <person name="Cobley V."/>
            <person name="Collier R.E."/>
            <person name="Corby N."/>
            <person name="Coville G.J."/>
            <person name="Davies J."/>
            <person name="Deadman R."/>
            <person name="Dunn M."/>
            <person name="Earthrowl M."/>
            <person name="Ellington A.G."/>
            <person name="Errington H."/>
            <person name="Frankish A."/>
            <person name="Frankland J."/>
            <person name="French L."/>
            <person name="Garner P."/>
            <person name="Garnett J."/>
            <person name="Gay L."/>
            <person name="Ghori M.R.J."/>
            <person name="Gibson R."/>
            <person name="Gilby L.M."/>
            <person name="Gillett W."/>
            <person name="Glithero R.J."/>
            <person name="Grafham D.V."/>
            <person name="Griffiths C."/>
            <person name="Griffiths-Jones S."/>
            <person name="Grocock R."/>
            <person name="Hammond S."/>
            <person name="Harrison E.S.I."/>
            <person name="Hart E."/>
            <person name="Haugen E."/>
            <person name="Heath P.D."/>
            <person name="Holmes S."/>
            <person name="Holt K."/>
            <person name="Howden P.J."/>
            <person name="Hunt A.R."/>
            <person name="Hunt S.E."/>
            <person name="Hunter G."/>
            <person name="Isherwood J."/>
            <person name="James R."/>
            <person name="Johnson C."/>
            <person name="Johnson D."/>
            <person name="Joy A."/>
            <person name="Kay M."/>
            <person name="Kershaw J.K."/>
            <person name="Kibukawa M."/>
            <person name="Kimberley A.M."/>
            <person name="King A."/>
            <person name="Knights A.J."/>
            <person name="Lad H."/>
            <person name="Laird G."/>
            <person name="Lawlor S."/>
            <person name="Leongamornlert D.A."/>
            <person name="Lloyd D.M."/>
            <person name="Loveland J."/>
            <person name="Lovell J."/>
            <person name="Lush M.J."/>
            <person name="Lyne R."/>
            <person name="Martin S."/>
            <person name="Mashreghi-Mohammadi M."/>
            <person name="Matthews L."/>
            <person name="Matthews N.S.W."/>
            <person name="McLaren S."/>
            <person name="Milne S."/>
            <person name="Mistry S."/>
            <person name="Moore M.J.F."/>
            <person name="Nickerson T."/>
            <person name="O'Dell C.N."/>
            <person name="Oliver K."/>
            <person name="Palmeiri A."/>
            <person name="Palmer S.A."/>
            <person name="Parker A."/>
            <person name="Patel D."/>
            <person name="Pearce A.V."/>
            <person name="Peck A.I."/>
            <person name="Pelan S."/>
            <person name="Phelps K."/>
            <person name="Phillimore B.J."/>
            <person name="Plumb R."/>
            <person name="Rajan J."/>
            <person name="Raymond C."/>
            <person name="Rouse G."/>
            <person name="Saenphimmachak C."/>
            <person name="Sehra H.K."/>
            <person name="Sheridan E."/>
            <person name="Shownkeen R."/>
            <person name="Sims S."/>
            <person name="Skuce C.D."/>
            <person name="Smith M."/>
            <person name="Steward C."/>
            <person name="Subramanian S."/>
            <person name="Sycamore N."/>
            <person name="Tracey A."/>
            <person name="Tromans A."/>
            <person name="Van Helmond Z."/>
            <person name="Wall M."/>
            <person name="Wallis J.M."/>
            <person name="White S."/>
            <person name="Whitehead S.L."/>
            <person name="Wilkinson J.E."/>
            <person name="Willey D.L."/>
            <person name="Williams H."/>
            <person name="Wilming L."/>
            <person name="Wray P.W."/>
            <person name="Wu Z."/>
            <person name="Coulson A."/>
            <person name="Vaudin M."/>
            <person name="Sulston J.E."/>
            <person name="Durbin R.M."/>
            <person name="Hubbard T."/>
            <person name="Wooster R."/>
            <person name="Dunham I."/>
            <person name="Carter N.P."/>
            <person name="McVean G."/>
            <person name="Ross M.T."/>
            <person name="Harrow J."/>
            <person name="Olson M.V."/>
            <person name="Beck S."/>
            <person name="Rogers J."/>
            <person name="Bentley D.R."/>
        </authorList>
    </citation>
    <scope>NUCLEOTIDE SEQUENCE [LARGE SCALE GENOMIC DNA]</scope>
</reference>
<reference key="3">
    <citation type="journal article" date="2012" name="Cell">
        <title>BMP8B increases brown adipose tissue thermogenesis through both central and peripheral actions.</title>
        <authorList>
            <person name="Whittle A.J."/>
            <person name="Carobbio S."/>
            <person name="Martins L."/>
            <person name="Slawik M."/>
            <person name="Hondares E."/>
            <person name="Vazquez M.J."/>
            <person name="Morgan D."/>
            <person name="Csikasz R.I."/>
            <person name="Gallego R."/>
            <person name="Rodriguez-Cuenca S."/>
            <person name="Dale M."/>
            <person name="Virtue S."/>
            <person name="Villarroya F."/>
            <person name="Cannon B."/>
            <person name="Rahmouni K."/>
            <person name="Lopez M."/>
            <person name="Vidal-Puig A."/>
        </authorList>
    </citation>
    <scope>FUNCTION</scope>
</reference>
<reference key="4">
    <citation type="journal article" date="2020" name="Reproduction">
        <title>Human BMP8A suppresses luteinization of rat granulosa cells via the SMAD1/5/8 pathway.</title>
        <authorList>
            <person name="Wu F.J."/>
            <person name="Wang Y.W."/>
            <person name="Luo C.W."/>
        </authorList>
    </citation>
    <scope>FUNCTION</scope>
</reference>
<dbReference type="EMBL" id="AY303954">
    <property type="protein sequence ID" value="AAP74559.1"/>
    <property type="molecule type" value="mRNA"/>
</dbReference>
<dbReference type="EMBL" id="AL365277">
    <property type="status" value="NOT_ANNOTATED_CDS"/>
    <property type="molecule type" value="Genomic_DNA"/>
</dbReference>
<dbReference type="CCDS" id="CCDS437.1"/>
<dbReference type="RefSeq" id="NP_861525.2">
    <property type="nucleotide sequence ID" value="NM_181809.4"/>
</dbReference>
<dbReference type="SMR" id="Q7Z5Y6"/>
<dbReference type="BioGRID" id="131696">
    <property type="interactions" value="68"/>
</dbReference>
<dbReference type="FunCoup" id="Q7Z5Y6">
    <property type="interactions" value="618"/>
</dbReference>
<dbReference type="IntAct" id="Q7Z5Y6">
    <property type="interactions" value="18"/>
</dbReference>
<dbReference type="MINT" id="Q7Z5Y6"/>
<dbReference type="STRING" id="9606.ENSP00000327440"/>
<dbReference type="GlyCosmos" id="Q7Z5Y6">
    <property type="glycosylation" value="2 sites, No reported glycans"/>
</dbReference>
<dbReference type="GlyGen" id="Q7Z5Y6">
    <property type="glycosylation" value="2 sites"/>
</dbReference>
<dbReference type="iPTMnet" id="Q7Z5Y6"/>
<dbReference type="PhosphoSitePlus" id="Q7Z5Y6"/>
<dbReference type="BioMuta" id="BMP8A"/>
<dbReference type="DMDM" id="90111975"/>
<dbReference type="jPOST" id="Q7Z5Y6"/>
<dbReference type="MassIVE" id="Q7Z5Y6"/>
<dbReference type="PaxDb" id="9606-ENSP00000327440"/>
<dbReference type="PeptideAtlas" id="Q7Z5Y6"/>
<dbReference type="ProteomicsDB" id="69359"/>
<dbReference type="Antibodypedia" id="31907">
    <property type="antibodies" value="176 antibodies from 25 providers"/>
</dbReference>
<dbReference type="DNASU" id="353500"/>
<dbReference type="Ensembl" id="ENST00000331593.6">
    <property type="protein sequence ID" value="ENSP00000327440.5"/>
    <property type="gene ID" value="ENSG00000183682.8"/>
</dbReference>
<dbReference type="GeneID" id="353500"/>
<dbReference type="KEGG" id="hsa:353500"/>
<dbReference type="MANE-Select" id="ENST00000331593.6">
    <property type="protein sequence ID" value="ENSP00000327440.5"/>
    <property type="RefSeq nucleotide sequence ID" value="NM_181809.4"/>
    <property type="RefSeq protein sequence ID" value="NP_861525.2"/>
</dbReference>
<dbReference type="UCSC" id="uc001cdi.4">
    <property type="organism name" value="human"/>
</dbReference>
<dbReference type="AGR" id="HGNC:21650"/>
<dbReference type="CTD" id="353500"/>
<dbReference type="DisGeNET" id="353500"/>
<dbReference type="GeneCards" id="BMP8A"/>
<dbReference type="HGNC" id="HGNC:21650">
    <property type="gene designation" value="BMP8A"/>
</dbReference>
<dbReference type="HPA" id="ENSG00000183682">
    <property type="expression patterns" value="Tissue enriched (thyroid)"/>
</dbReference>
<dbReference type="MIM" id="620847">
    <property type="type" value="gene"/>
</dbReference>
<dbReference type="neXtProt" id="NX_Q7Z5Y6"/>
<dbReference type="OpenTargets" id="ENSG00000183682"/>
<dbReference type="PharmGKB" id="PA134894231"/>
<dbReference type="VEuPathDB" id="HostDB:ENSG00000183682"/>
<dbReference type="eggNOG" id="KOG3900">
    <property type="taxonomic scope" value="Eukaryota"/>
</dbReference>
<dbReference type="GeneTree" id="ENSGT00940000155272"/>
<dbReference type="HOGENOM" id="CLU_020515_4_1_1"/>
<dbReference type="InParanoid" id="Q7Z5Y6"/>
<dbReference type="OMA" id="YCAGECI"/>
<dbReference type="OrthoDB" id="5987191at2759"/>
<dbReference type="PAN-GO" id="Q7Z5Y6">
    <property type="GO annotations" value="6 GO annotations based on evolutionary models"/>
</dbReference>
<dbReference type="PhylomeDB" id="Q7Z5Y6"/>
<dbReference type="TreeFam" id="TF316134"/>
<dbReference type="PathwayCommons" id="Q7Z5Y6"/>
<dbReference type="SignaLink" id="Q7Z5Y6"/>
<dbReference type="BioGRID-ORCS" id="353500">
    <property type="hits" value="21 hits in 1140 CRISPR screens"/>
</dbReference>
<dbReference type="ChiTaRS" id="BMP8A">
    <property type="organism name" value="human"/>
</dbReference>
<dbReference type="GeneWiki" id="Bone_morphogenetic_protein_8A"/>
<dbReference type="GenomeRNAi" id="353500"/>
<dbReference type="Pharos" id="Q7Z5Y6">
    <property type="development level" value="Tbio"/>
</dbReference>
<dbReference type="PRO" id="PR:Q7Z5Y6"/>
<dbReference type="Proteomes" id="UP000005640">
    <property type="component" value="Chromosome 1"/>
</dbReference>
<dbReference type="RNAct" id="Q7Z5Y6">
    <property type="molecule type" value="protein"/>
</dbReference>
<dbReference type="Bgee" id="ENSG00000183682">
    <property type="expression patterns" value="Expressed in right lobe of thyroid gland and 106 other cell types or tissues"/>
</dbReference>
<dbReference type="GO" id="GO:0005615">
    <property type="term" value="C:extracellular space"/>
    <property type="evidence" value="ECO:0000318"/>
    <property type="project" value="GO_Central"/>
</dbReference>
<dbReference type="GO" id="GO:0005125">
    <property type="term" value="F:cytokine activity"/>
    <property type="evidence" value="ECO:0000318"/>
    <property type="project" value="GO_Central"/>
</dbReference>
<dbReference type="GO" id="GO:0008083">
    <property type="term" value="F:growth factor activity"/>
    <property type="evidence" value="ECO:0007669"/>
    <property type="project" value="UniProtKB-KW"/>
</dbReference>
<dbReference type="GO" id="GO:0051216">
    <property type="term" value="P:cartilage development"/>
    <property type="evidence" value="ECO:0007669"/>
    <property type="project" value="UniProtKB-KW"/>
</dbReference>
<dbReference type="GO" id="GO:0030154">
    <property type="term" value="P:cell differentiation"/>
    <property type="evidence" value="ECO:0000314"/>
    <property type="project" value="UniProt"/>
</dbReference>
<dbReference type="GO" id="GO:0002024">
    <property type="term" value="P:diet induced thermogenesis"/>
    <property type="evidence" value="ECO:0000314"/>
    <property type="project" value="UniProtKB"/>
</dbReference>
<dbReference type="GO" id="GO:0097009">
    <property type="term" value="P:energy homeostasis"/>
    <property type="evidence" value="ECO:0000314"/>
    <property type="project" value="UniProtKB"/>
</dbReference>
<dbReference type="GO" id="GO:0046676">
    <property type="term" value="P:negative regulation of insulin secretion"/>
    <property type="evidence" value="ECO:0000314"/>
    <property type="project" value="UniProtKB"/>
</dbReference>
<dbReference type="GO" id="GO:0001503">
    <property type="term" value="P:ossification"/>
    <property type="evidence" value="ECO:0007669"/>
    <property type="project" value="UniProtKB-KW"/>
</dbReference>
<dbReference type="CDD" id="cd19398">
    <property type="entry name" value="TGF_beta_BMP8"/>
    <property type="match status" value="1"/>
</dbReference>
<dbReference type="FunFam" id="2.60.120.970:FF:000017">
    <property type="entry name" value="Bone morphogenetic protein 8a"/>
    <property type="match status" value="1"/>
</dbReference>
<dbReference type="FunFam" id="2.10.90.10:FF:000020">
    <property type="entry name" value="bone morphogenetic protein 8B"/>
    <property type="match status" value="1"/>
</dbReference>
<dbReference type="Gene3D" id="2.60.120.970">
    <property type="match status" value="1"/>
</dbReference>
<dbReference type="Gene3D" id="2.10.90.10">
    <property type="entry name" value="Cystine-knot cytokines"/>
    <property type="match status" value="1"/>
</dbReference>
<dbReference type="InterPro" id="IPR029034">
    <property type="entry name" value="Cystine-knot_cytokine"/>
</dbReference>
<dbReference type="InterPro" id="IPR001839">
    <property type="entry name" value="TGF-b_C"/>
</dbReference>
<dbReference type="InterPro" id="IPR001111">
    <property type="entry name" value="TGF-b_propeptide"/>
</dbReference>
<dbReference type="InterPro" id="IPR015615">
    <property type="entry name" value="TGF-beta-rel"/>
</dbReference>
<dbReference type="InterPro" id="IPR017948">
    <property type="entry name" value="TGFb_CS"/>
</dbReference>
<dbReference type="PANTHER" id="PTHR11848:SF293">
    <property type="entry name" value="BONE MORPHOGENETIC PROTEIN 8A"/>
    <property type="match status" value="1"/>
</dbReference>
<dbReference type="PANTHER" id="PTHR11848">
    <property type="entry name" value="TGF-BETA FAMILY"/>
    <property type="match status" value="1"/>
</dbReference>
<dbReference type="Pfam" id="PF00019">
    <property type="entry name" value="TGF_beta"/>
    <property type="match status" value="1"/>
</dbReference>
<dbReference type="Pfam" id="PF00688">
    <property type="entry name" value="TGFb_propeptide"/>
    <property type="match status" value="1"/>
</dbReference>
<dbReference type="PRINTS" id="PR00669">
    <property type="entry name" value="INHIBINA"/>
</dbReference>
<dbReference type="SMART" id="SM00204">
    <property type="entry name" value="TGFB"/>
    <property type="match status" value="1"/>
</dbReference>
<dbReference type="SUPFAM" id="SSF57501">
    <property type="entry name" value="Cystine-knot cytokines"/>
    <property type="match status" value="1"/>
</dbReference>
<dbReference type="PROSITE" id="PS00250">
    <property type="entry name" value="TGF_BETA_1"/>
    <property type="match status" value="1"/>
</dbReference>
<dbReference type="PROSITE" id="PS51362">
    <property type="entry name" value="TGF_BETA_2"/>
    <property type="match status" value="1"/>
</dbReference>
<name>BMP8A_HUMAN</name>
<accession>Q7Z5Y6</accession>
<accession>Q5T3A5</accession>
<organism>
    <name type="scientific">Homo sapiens</name>
    <name type="common">Human</name>
    <dbReference type="NCBI Taxonomy" id="9606"/>
    <lineage>
        <taxon>Eukaryota</taxon>
        <taxon>Metazoa</taxon>
        <taxon>Chordata</taxon>
        <taxon>Craniata</taxon>
        <taxon>Vertebrata</taxon>
        <taxon>Euteleostomi</taxon>
        <taxon>Mammalia</taxon>
        <taxon>Eutheria</taxon>
        <taxon>Euarchontoglires</taxon>
        <taxon>Primates</taxon>
        <taxon>Haplorrhini</taxon>
        <taxon>Catarrhini</taxon>
        <taxon>Hominidae</taxon>
        <taxon>Homo</taxon>
    </lineage>
</organism>